<sequence>MEKQQIEELKQLLWRLENEIRETKDSLRKINKSIDQYDKYTYLKTS</sequence>
<evidence type="ECO:0000250" key="1"/>
<evidence type="ECO:0000305" key="2"/>
<gene>
    <name type="primary">degQ</name>
    <name type="synonym">sacQ</name>
</gene>
<reference key="1">
    <citation type="journal article" date="1987" name="J. Bacteriol.">
        <title>Characterization of the sacQ genes from Bacillus licheniformis and Bacillus subtilis.</title>
        <authorList>
            <person name="Amory A."/>
            <person name="Kunst F."/>
            <person name="Aubert E."/>
            <person name="Klier A."/>
            <person name="Rapoport G."/>
        </authorList>
    </citation>
    <scope>NUCLEOTIDE SEQUENCE [GENOMIC DNA]</scope>
</reference>
<reference key="2">
    <citation type="journal article" date="1987" name="Agric. Biol. Chem.">
        <title>Nucleotide sequence of the gene increasing the extracellular proteolytic activities of Bacillus licheniformis; comparison with similar phenotypic genes from other Bacillus sp.</title>
        <authorList>
            <person name="Watanabe K."/>
            <person name="Sato N."/>
            <person name="Asano K."/>
            <person name="Hatanaka Y."/>
            <person name="Okada J."/>
            <person name="Murata K."/>
            <person name="Kimura A."/>
        </authorList>
    </citation>
    <scope>NUCLEOTIDE SEQUENCE [GENOMIC DNA]</scope>
</reference>
<name>DEGQ_BACLI</name>
<accession>P69890</accession>
<accession>P12051</accession>
<accession>P18189</accession>
<protein>
    <recommendedName>
        <fullName>Degradation enzyme regulation protein DegQ</fullName>
    </recommendedName>
    <alternativeName>
        <fullName>Regulatory factor SacQ</fullName>
    </alternativeName>
</protein>
<comment type="function">
    <text evidence="1">Stimulates the phosphotransfer from phospho-DegS to DegU (By similarity). Affects protease and levansucrose production.</text>
</comment>
<comment type="similarity">
    <text evidence="2">Belongs to the DegQ family.</text>
</comment>
<organism>
    <name type="scientific">Bacillus licheniformis</name>
    <dbReference type="NCBI Taxonomy" id="1402"/>
    <lineage>
        <taxon>Bacteria</taxon>
        <taxon>Bacillati</taxon>
        <taxon>Bacillota</taxon>
        <taxon>Bacilli</taxon>
        <taxon>Bacillales</taxon>
        <taxon>Bacillaceae</taxon>
        <taxon>Bacillus</taxon>
    </lineage>
</organism>
<feature type="chain" id="PRO_0000079854" description="Degradation enzyme regulation protein DegQ">
    <location>
        <begin position="1"/>
        <end position="46"/>
    </location>
</feature>
<feature type="sequence conflict" description="In Ref. 2; AAA22657." evidence="2" ref="2">
    <original>QYDKYTYLKTS</original>
    <variation>LLIQV</variation>
    <location>
        <begin position="36"/>
        <end position="46"/>
    </location>
</feature>
<dbReference type="EMBL" id="M27975">
    <property type="protein sequence ID" value="AAA22730.1"/>
    <property type="molecule type" value="Genomic_DNA"/>
</dbReference>
<dbReference type="EMBL" id="M35503">
    <property type="protein sequence ID" value="AAA22657.1"/>
    <property type="molecule type" value="Genomic_DNA"/>
</dbReference>
<dbReference type="PIR" id="A26929">
    <property type="entry name" value="A26929"/>
</dbReference>
<dbReference type="PIR" id="I39944">
    <property type="entry name" value="I39944"/>
</dbReference>
<dbReference type="RefSeq" id="WP_003184860.1">
    <property type="nucleotide sequence ID" value="NZ_VEGU01000019.1"/>
</dbReference>
<dbReference type="SMR" id="P69890"/>
<dbReference type="GeneID" id="92860059"/>
<dbReference type="PATRIC" id="fig|1402.62.peg.1585"/>
<dbReference type="GO" id="GO:1900192">
    <property type="term" value="P:positive regulation of single-species biofilm formation"/>
    <property type="evidence" value="ECO:0007669"/>
    <property type="project" value="InterPro"/>
</dbReference>
<dbReference type="InterPro" id="IPR012554">
    <property type="entry name" value="DegQ"/>
</dbReference>
<dbReference type="NCBIfam" id="NF041457">
    <property type="entry name" value="reg_protDegQ_Bacil"/>
    <property type="match status" value="1"/>
</dbReference>
<dbReference type="Pfam" id="PF08181">
    <property type="entry name" value="DegQ"/>
    <property type="match status" value="1"/>
</dbReference>
<proteinExistence type="inferred from homology"/>